<proteinExistence type="evidence at transcript level"/>
<comment type="function">
    <text evidence="1">May act as a transcriptional coregulator during muscle development through its interaction with SNW1. Has lost its ancestral function as a Na,K-ATPase beta-subunit (By similarity).</text>
</comment>
<comment type="subunit">
    <text evidence="1">Associates with a SMAD7-transcriptional complex. Interacts with SNW1 and TOR1AIP1. Does not associate with known Na,K-ATPase alpha-subunits (By similarity).</text>
</comment>
<comment type="subcellular location">
    <subcellularLocation>
        <location evidence="1">Nucleus inner membrane</location>
        <topology evidence="1">Single-pass type II membrane protein</topology>
    </subcellularLocation>
    <text evidence="1">Detected in nuclear envelops.</text>
</comment>
<comment type="similarity">
    <text evidence="4">Belongs to the X(+)/potassium ATPases subunit beta family.</text>
</comment>
<sequence>MRRQLRSRRAPALPYGYRYRLDDQDEVNQNYLADEEEEAEEEARVMVVPDLEEEEEEEEEKEEEEKEEEDSHSQETDSAWWRKLQIVNEYLWDPEKRTSLARTGQSWSLILVIYFFFYASLAAVITLCMYTLFLTISPYMPTFTERVKPPGVMIRPFAHSLNFNFNVSEPDTWQHYVISLNGFLQGYNDSLQEEMNVDCPPGQYFIQDGDEDEDKKACQFKRSFLKNCSGLEDPTFGYSTGQPCILLKMNRIVGFRPERGDPVKVSCKVQRGDENDIRSINYYPESASFDLRYYPYYGKLTHVNYTSPLVAMHFTDVVKNQAVPVQCQLKGKGIINDVINDRFVGRVIFTLNIET</sequence>
<name>AT1B4_BOVIN</name>
<evidence type="ECO:0000250" key="1"/>
<evidence type="ECO:0000255" key="2"/>
<evidence type="ECO:0000256" key="3">
    <source>
        <dbReference type="SAM" id="MobiDB-lite"/>
    </source>
</evidence>
<evidence type="ECO:0000305" key="4"/>
<organism>
    <name type="scientific">Bos taurus</name>
    <name type="common">Bovine</name>
    <dbReference type="NCBI Taxonomy" id="9913"/>
    <lineage>
        <taxon>Eukaryota</taxon>
        <taxon>Metazoa</taxon>
        <taxon>Chordata</taxon>
        <taxon>Craniata</taxon>
        <taxon>Vertebrata</taxon>
        <taxon>Euteleostomi</taxon>
        <taxon>Mammalia</taxon>
        <taxon>Eutheria</taxon>
        <taxon>Laurasiatheria</taxon>
        <taxon>Artiodactyla</taxon>
        <taxon>Ruminantia</taxon>
        <taxon>Pecora</taxon>
        <taxon>Bovidae</taxon>
        <taxon>Bovinae</taxon>
        <taxon>Bos</taxon>
    </lineage>
</organism>
<feature type="chain" id="PRO_0000393963" description="Protein ATP1B4">
    <location>
        <begin position="1"/>
        <end position="355"/>
    </location>
</feature>
<feature type="topological domain" description="Nuclear" evidence="2">
    <location>
        <begin position="1"/>
        <end position="108"/>
    </location>
</feature>
<feature type="transmembrane region" description="Helical; Signal-anchor for type II membrane protein" evidence="2">
    <location>
        <begin position="109"/>
        <end position="129"/>
    </location>
</feature>
<feature type="topological domain" description="Perinuclear space" evidence="2">
    <location>
        <begin position="130"/>
        <end position="355"/>
    </location>
</feature>
<feature type="region of interest" description="Disordered" evidence="3">
    <location>
        <begin position="33"/>
        <end position="77"/>
    </location>
</feature>
<feature type="compositionally biased region" description="Acidic residues" evidence="3">
    <location>
        <begin position="50"/>
        <end position="68"/>
    </location>
</feature>
<reference key="1">
    <citation type="submission" date="2007-07" db="EMBL/GenBank/DDBJ databases">
        <authorList>
            <consortium name="NIH - Mammalian Gene Collection (MGC) project"/>
        </authorList>
    </citation>
    <scope>NUCLEOTIDE SEQUENCE [LARGE SCALE MRNA]</scope>
    <source>
        <strain>Hereford</strain>
        <tissue>Fetal muscle</tissue>
    </source>
</reference>
<keyword id="KW-0472">Membrane</keyword>
<keyword id="KW-0539">Nucleus</keyword>
<keyword id="KW-1185">Reference proteome</keyword>
<keyword id="KW-0735">Signal-anchor</keyword>
<keyword id="KW-0804">Transcription</keyword>
<keyword id="KW-0805">Transcription regulation</keyword>
<keyword id="KW-0812">Transmembrane</keyword>
<keyword id="KW-1133">Transmembrane helix</keyword>
<dbReference type="EMBL" id="BC151371">
    <property type="protein sequence ID" value="AAI51372.1"/>
    <property type="molecule type" value="mRNA"/>
</dbReference>
<dbReference type="RefSeq" id="NP_001095389.1">
    <property type="nucleotide sequence ID" value="NM_001101919.1"/>
</dbReference>
<dbReference type="SMR" id="A7MB71"/>
<dbReference type="FunCoup" id="A7MB71">
    <property type="interactions" value="153"/>
</dbReference>
<dbReference type="STRING" id="9913.ENSBTAP00000011741"/>
<dbReference type="PaxDb" id="9913-ENSBTAP00000011741"/>
<dbReference type="Ensembl" id="ENSBTAT00000011740.6">
    <property type="protein sequence ID" value="ENSBTAP00000011741.4"/>
    <property type="gene ID" value="ENSBTAG00000008920.6"/>
</dbReference>
<dbReference type="GeneID" id="510026"/>
<dbReference type="KEGG" id="bta:510026"/>
<dbReference type="CTD" id="23439"/>
<dbReference type="VEuPathDB" id="HostDB:ENSBTAG00000008920"/>
<dbReference type="VGNC" id="VGNC:26288">
    <property type="gene designation" value="ATP1B4"/>
</dbReference>
<dbReference type="eggNOG" id="KOG3927">
    <property type="taxonomic scope" value="Eukaryota"/>
</dbReference>
<dbReference type="GeneTree" id="ENSGT01030000234579"/>
<dbReference type="HOGENOM" id="CLU_057702_1_0_1"/>
<dbReference type="InParanoid" id="A7MB71"/>
<dbReference type="OMA" id="FGGCMFC"/>
<dbReference type="OrthoDB" id="5912413at2759"/>
<dbReference type="TreeFam" id="TF314618"/>
<dbReference type="Reactome" id="R-BTA-2173795">
    <property type="pathway name" value="Downregulation of SMAD2/3:SMAD4 transcriptional activity"/>
</dbReference>
<dbReference type="Proteomes" id="UP000009136">
    <property type="component" value="Chromosome X"/>
</dbReference>
<dbReference type="Bgee" id="ENSBTAG00000008920">
    <property type="expression patterns" value="Expressed in supraspinatus muscle and 26 other cell types or tissues"/>
</dbReference>
<dbReference type="GO" id="GO:0005637">
    <property type="term" value="C:nuclear inner membrane"/>
    <property type="evidence" value="ECO:0000250"/>
    <property type="project" value="UniProtKB"/>
</dbReference>
<dbReference type="GO" id="GO:0005890">
    <property type="term" value="C:sodium:potassium-exchanging ATPase complex"/>
    <property type="evidence" value="ECO:0007669"/>
    <property type="project" value="InterPro"/>
</dbReference>
<dbReference type="GO" id="GO:0006813">
    <property type="term" value="P:potassium ion transport"/>
    <property type="evidence" value="ECO:0007669"/>
    <property type="project" value="InterPro"/>
</dbReference>
<dbReference type="GO" id="GO:0006355">
    <property type="term" value="P:regulation of DNA-templated transcription"/>
    <property type="evidence" value="ECO:0000250"/>
    <property type="project" value="UniProtKB"/>
</dbReference>
<dbReference type="GO" id="GO:0006814">
    <property type="term" value="P:sodium ion transport"/>
    <property type="evidence" value="ECO:0007669"/>
    <property type="project" value="InterPro"/>
</dbReference>
<dbReference type="FunFam" id="2.60.40.1660:FF:000001">
    <property type="entry name" value="Sodium/potassium-transporting ATPase subunit beta"/>
    <property type="match status" value="1"/>
</dbReference>
<dbReference type="Gene3D" id="2.60.40.1660">
    <property type="entry name" value="Na, k-atpase alpha subunit"/>
    <property type="match status" value="1"/>
</dbReference>
<dbReference type="InterPro" id="IPR000402">
    <property type="entry name" value="Na/K_ATPase_sub_beta"/>
</dbReference>
<dbReference type="InterPro" id="IPR038702">
    <property type="entry name" value="Na/K_ATPase_sub_beta_sf"/>
</dbReference>
<dbReference type="NCBIfam" id="TIGR01107">
    <property type="entry name" value="Na_K_ATPase_bet"/>
    <property type="match status" value="1"/>
</dbReference>
<dbReference type="PANTHER" id="PTHR11523:SF12">
    <property type="entry name" value="PROTEIN ATP1B4"/>
    <property type="match status" value="1"/>
</dbReference>
<dbReference type="PANTHER" id="PTHR11523">
    <property type="entry name" value="SODIUM/POTASSIUM-DEPENDENT ATPASE BETA SUBUNIT"/>
    <property type="match status" value="1"/>
</dbReference>
<dbReference type="Pfam" id="PF00287">
    <property type="entry name" value="Na_K-ATPase"/>
    <property type="match status" value="1"/>
</dbReference>
<dbReference type="PROSITE" id="PS00390">
    <property type="entry name" value="ATPASE_NA_K_BETA_1"/>
    <property type="match status" value="1"/>
</dbReference>
<dbReference type="PROSITE" id="PS00391">
    <property type="entry name" value="ATPASE_NA_K_BETA_2"/>
    <property type="match status" value="1"/>
</dbReference>
<gene>
    <name type="primary">ATP1B4</name>
</gene>
<protein>
    <recommendedName>
        <fullName>Protein ATP1B4</fullName>
    </recommendedName>
    <alternativeName>
        <fullName>X,K-ATPase subunit beta-m</fullName>
    </alternativeName>
    <alternativeName>
        <fullName>X/potassium-transporting ATPase subunit beta-m</fullName>
    </alternativeName>
</protein>
<accession>A7MB71</accession>